<dbReference type="EC" id="6.1.1.21" evidence="1"/>
<dbReference type="EMBL" id="CP001339">
    <property type="protein sequence ID" value="ACL73128.1"/>
    <property type="molecule type" value="Genomic_DNA"/>
</dbReference>
<dbReference type="RefSeq" id="WP_012638607.1">
    <property type="nucleotide sequence ID" value="NC_011901.1"/>
</dbReference>
<dbReference type="SMR" id="B8GTN4"/>
<dbReference type="STRING" id="396588.Tgr7_2048"/>
<dbReference type="KEGG" id="tgr:Tgr7_2048"/>
<dbReference type="eggNOG" id="COG0124">
    <property type="taxonomic scope" value="Bacteria"/>
</dbReference>
<dbReference type="HOGENOM" id="CLU_025113_1_1_6"/>
<dbReference type="OrthoDB" id="9800814at2"/>
<dbReference type="Proteomes" id="UP000002383">
    <property type="component" value="Chromosome"/>
</dbReference>
<dbReference type="GO" id="GO:0005737">
    <property type="term" value="C:cytoplasm"/>
    <property type="evidence" value="ECO:0007669"/>
    <property type="project" value="UniProtKB-SubCell"/>
</dbReference>
<dbReference type="GO" id="GO:0005524">
    <property type="term" value="F:ATP binding"/>
    <property type="evidence" value="ECO:0007669"/>
    <property type="project" value="UniProtKB-UniRule"/>
</dbReference>
<dbReference type="GO" id="GO:0004821">
    <property type="term" value="F:histidine-tRNA ligase activity"/>
    <property type="evidence" value="ECO:0007669"/>
    <property type="project" value="UniProtKB-UniRule"/>
</dbReference>
<dbReference type="GO" id="GO:0006427">
    <property type="term" value="P:histidyl-tRNA aminoacylation"/>
    <property type="evidence" value="ECO:0007669"/>
    <property type="project" value="UniProtKB-UniRule"/>
</dbReference>
<dbReference type="CDD" id="cd00773">
    <property type="entry name" value="HisRS-like_core"/>
    <property type="match status" value="1"/>
</dbReference>
<dbReference type="CDD" id="cd00859">
    <property type="entry name" value="HisRS_anticodon"/>
    <property type="match status" value="1"/>
</dbReference>
<dbReference type="FunFam" id="3.30.930.10:FF:000005">
    <property type="entry name" value="Histidine--tRNA ligase"/>
    <property type="match status" value="1"/>
</dbReference>
<dbReference type="Gene3D" id="3.40.50.800">
    <property type="entry name" value="Anticodon-binding domain"/>
    <property type="match status" value="1"/>
</dbReference>
<dbReference type="Gene3D" id="3.30.930.10">
    <property type="entry name" value="Bira Bifunctional Protein, Domain 2"/>
    <property type="match status" value="1"/>
</dbReference>
<dbReference type="HAMAP" id="MF_00127">
    <property type="entry name" value="His_tRNA_synth"/>
    <property type="match status" value="1"/>
</dbReference>
<dbReference type="InterPro" id="IPR006195">
    <property type="entry name" value="aa-tRNA-synth_II"/>
</dbReference>
<dbReference type="InterPro" id="IPR045864">
    <property type="entry name" value="aa-tRNA-synth_II/BPL/LPL"/>
</dbReference>
<dbReference type="InterPro" id="IPR004154">
    <property type="entry name" value="Anticodon-bd"/>
</dbReference>
<dbReference type="InterPro" id="IPR036621">
    <property type="entry name" value="Anticodon-bd_dom_sf"/>
</dbReference>
<dbReference type="InterPro" id="IPR015807">
    <property type="entry name" value="His-tRNA-ligase"/>
</dbReference>
<dbReference type="InterPro" id="IPR041715">
    <property type="entry name" value="HisRS-like_core"/>
</dbReference>
<dbReference type="InterPro" id="IPR004516">
    <property type="entry name" value="HisRS/HisZ"/>
</dbReference>
<dbReference type="InterPro" id="IPR033656">
    <property type="entry name" value="HisRS_anticodon"/>
</dbReference>
<dbReference type="NCBIfam" id="TIGR00442">
    <property type="entry name" value="hisS"/>
    <property type="match status" value="1"/>
</dbReference>
<dbReference type="PANTHER" id="PTHR43707:SF1">
    <property type="entry name" value="HISTIDINE--TRNA LIGASE, MITOCHONDRIAL-RELATED"/>
    <property type="match status" value="1"/>
</dbReference>
<dbReference type="PANTHER" id="PTHR43707">
    <property type="entry name" value="HISTIDYL-TRNA SYNTHETASE"/>
    <property type="match status" value="1"/>
</dbReference>
<dbReference type="Pfam" id="PF03129">
    <property type="entry name" value="HGTP_anticodon"/>
    <property type="match status" value="1"/>
</dbReference>
<dbReference type="Pfam" id="PF13393">
    <property type="entry name" value="tRNA-synt_His"/>
    <property type="match status" value="1"/>
</dbReference>
<dbReference type="PIRSF" id="PIRSF001549">
    <property type="entry name" value="His-tRNA_synth"/>
    <property type="match status" value="1"/>
</dbReference>
<dbReference type="SUPFAM" id="SSF52954">
    <property type="entry name" value="Class II aaRS ABD-related"/>
    <property type="match status" value="1"/>
</dbReference>
<dbReference type="SUPFAM" id="SSF55681">
    <property type="entry name" value="Class II aaRS and biotin synthetases"/>
    <property type="match status" value="1"/>
</dbReference>
<dbReference type="PROSITE" id="PS50862">
    <property type="entry name" value="AA_TRNA_LIGASE_II"/>
    <property type="match status" value="1"/>
</dbReference>
<organism>
    <name type="scientific">Thioalkalivibrio sulfidiphilus (strain HL-EbGR7)</name>
    <dbReference type="NCBI Taxonomy" id="396588"/>
    <lineage>
        <taxon>Bacteria</taxon>
        <taxon>Pseudomonadati</taxon>
        <taxon>Pseudomonadota</taxon>
        <taxon>Gammaproteobacteria</taxon>
        <taxon>Chromatiales</taxon>
        <taxon>Ectothiorhodospiraceae</taxon>
        <taxon>Thioalkalivibrio</taxon>
    </lineage>
</organism>
<proteinExistence type="inferred from homology"/>
<keyword id="KW-0030">Aminoacyl-tRNA synthetase</keyword>
<keyword id="KW-0067">ATP-binding</keyword>
<keyword id="KW-0963">Cytoplasm</keyword>
<keyword id="KW-0436">Ligase</keyword>
<keyword id="KW-0547">Nucleotide-binding</keyword>
<keyword id="KW-0648">Protein biosynthesis</keyword>
<keyword id="KW-1185">Reference proteome</keyword>
<gene>
    <name evidence="1" type="primary">hisS</name>
    <name type="ordered locus">Tgr7_2048</name>
</gene>
<name>SYH_THISH</name>
<reference key="1">
    <citation type="journal article" date="2011" name="Stand. Genomic Sci.">
        <title>Complete genome sequence of 'Thioalkalivibrio sulfidophilus' HL-EbGr7.</title>
        <authorList>
            <person name="Muyzer G."/>
            <person name="Sorokin D.Y."/>
            <person name="Mavromatis K."/>
            <person name="Lapidus A."/>
            <person name="Clum A."/>
            <person name="Ivanova N."/>
            <person name="Pati A."/>
            <person name="d'Haeseleer P."/>
            <person name="Woyke T."/>
            <person name="Kyrpides N.C."/>
        </authorList>
    </citation>
    <scope>NUCLEOTIDE SEQUENCE [LARGE SCALE GENOMIC DNA]</scope>
    <source>
        <strain>HL-EbGR7</strain>
    </source>
</reference>
<protein>
    <recommendedName>
        <fullName evidence="1">Histidine--tRNA ligase</fullName>
        <ecNumber evidence="1">6.1.1.21</ecNumber>
    </recommendedName>
    <alternativeName>
        <fullName evidence="1">Histidyl-tRNA synthetase</fullName>
        <shortName evidence="1">HisRS</shortName>
    </alternativeName>
</protein>
<feature type="chain" id="PRO_1000199162" description="Histidine--tRNA ligase">
    <location>
        <begin position="1"/>
        <end position="424"/>
    </location>
</feature>
<sequence>MSKTLQSIRGMHDVLPADTPAWQWLEAAARELLAGYGYEEIRMPIVEQTELFARSIGEVTDIVEKEMYTFEDRNGDSLTLRPEGTAGCVRAGIEHGLLHNQQQRLWYMGPMFRHERPQKGRYRQFHQIGVETFGMDGPDIDAELIILTARLWRVLGLKDVRLEINSLGSTEARAAYRALLVQHFEAHAEVLDEDARRRLHSNPLRILDSKNPAMREVIRSAPSLLDHLDEASRAHFEGLKALLTAAGIEFTVNPALVRGLDYYCRTVFEWITESLGAQGTVCAGGRYDGLVEQLGGRATPAAGFAMGLERLLALVEAGGARPPAPKPHAYLALAGEGTQAEGLRLAESLRDALPGLRLVVNGGGGGFKAQIKRADRSGADLALIIGESELAEGTILVKPLREAGGEQQAVPRDGLAEFLRARIG</sequence>
<accession>B8GTN4</accession>
<comment type="catalytic activity">
    <reaction evidence="1">
        <text>tRNA(His) + L-histidine + ATP = L-histidyl-tRNA(His) + AMP + diphosphate + H(+)</text>
        <dbReference type="Rhea" id="RHEA:17313"/>
        <dbReference type="Rhea" id="RHEA-COMP:9665"/>
        <dbReference type="Rhea" id="RHEA-COMP:9689"/>
        <dbReference type="ChEBI" id="CHEBI:15378"/>
        <dbReference type="ChEBI" id="CHEBI:30616"/>
        <dbReference type="ChEBI" id="CHEBI:33019"/>
        <dbReference type="ChEBI" id="CHEBI:57595"/>
        <dbReference type="ChEBI" id="CHEBI:78442"/>
        <dbReference type="ChEBI" id="CHEBI:78527"/>
        <dbReference type="ChEBI" id="CHEBI:456215"/>
        <dbReference type="EC" id="6.1.1.21"/>
    </reaction>
</comment>
<comment type="subunit">
    <text evidence="1">Homodimer.</text>
</comment>
<comment type="subcellular location">
    <subcellularLocation>
        <location evidence="1">Cytoplasm</location>
    </subcellularLocation>
</comment>
<comment type="similarity">
    <text evidence="1">Belongs to the class-II aminoacyl-tRNA synthetase family.</text>
</comment>
<evidence type="ECO:0000255" key="1">
    <source>
        <dbReference type="HAMAP-Rule" id="MF_00127"/>
    </source>
</evidence>